<evidence type="ECO:0000255" key="1">
    <source>
        <dbReference type="HAMAP-Rule" id="MF_00338"/>
    </source>
</evidence>
<evidence type="ECO:0000305" key="2"/>
<comment type="similarity">
    <text evidence="1">Belongs to the UPF0145 family.</text>
</comment>
<comment type="sequence caution" evidence="2">
    <conflict type="erroneous initiation">
        <sequence resource="EMBL-CDS" id="CAD72962"/>
    </conflict>
</comment>
<dbReference type="EMBL" id="BX294138">
    <property type="protein sequence ID" value="CAD72962.1"/>
    <property type="status" value="ALT_INIT"/>
    <property type="molecule type" value="Genomic_DNA"/>
</dbReference>
<dbReference type="RefSeq" id="NP_865278.1">
    <property type="nucleotide sequence ID" value="NC_005027.1"/>
</dbReference>
<dbReference type="SMR" id="Q7UUW5"/>
<dbReference type="FunCoup" id="Q7UUW5">
    <property type="interactions" value="114"/>
</dbReference>
<dbReference type="STRING" id="243090.RB3016"/>
<dbReference type="EnsemblBacteria" id="CAD72962">
    <property type="protein sequence ID" value="CAD72962"/>
    <property type="gene ID" value="RB3016"/>
</dbReference>
<dbReference type="KEGG" id="rba:RB3016"/>
<dbReference type="eggNOG" id="COG0393">
    <property type="taxonomic scope" value="Bacteria"/>
</dbReference>
<dbReference type="HOGENOM" id="CLU_117144_1_1_0"/>
<dbReference type="InParanoid" id="Q7UUW5"/>
<dbReference type="OrthoDB" id="9796448at2"/>
<dbReference type="Proteomes" id="UP000001025">
    <property type="component" value="Chromosome"/>
</dbReference>
<dbReference type="Gene3D" id="3.30.110.70">
    <property type="entry name" value="Hypothetical protein apc22750. Chain B"/>
    <property type="match status" value="1"/>
</dbReference>
<dbReference type="HAMAP" id="MF_00338">
    <property type="entry name" value="UPF0145"/>
    <property type="match status" value="1"/>
</dbReference>
<dbReference type="InterPro" id="IPR035439">
    <property type="entry name" value="UPF0145_dom_sf"/>
</dbReference>
<dbReference type="InterPro" id="IPR002765">
    <property type="entry name" value="UPF0145_YbjQ-like"/>
</dbReference>
<dbReference type="PANTHER" id="PTHR34068">
    <property type="entry name" value="UPF0145 PROTEIN YBJQ"/>
    <property type="match status" value="1"/>
</dbReference>
<dbReference type="PANTHER" id="PTHR34068:SF1">
    <property type="entry name" value="UPF0145 PROTEIN YBJQ"/>
    <property type="match status" value="1"/>
</dbReference>
<dbReference type="Pfam" id="PF01906">
    <property type="entry name" value="YbjQ_1"/>
    <property type="match status" value="1"/>
</dbReference>
<dbReference type="SUPFAM" id="SSF117782">
    <property type="entry name" value="YbjQ-like"/>
    <property type="match status" value="1"/>
</dbReference>
<feature type="chain" id="PRO_0000225841" description="UPF0145 protein RB3016">
    <location>
        <begin position="1"/>
        <end position="112"/>
    </location>
</feature>
<reference key="1">
    <citation type="journal article" date="2003" name="Proc. Natl. Acad. Sci. U.S.A.">
        <title>Complete genome sequence of the marine planctomycete Pirellula sp. strain 1.</title>
        <authorList>
            <person name="Gloeckner F.O."/>
            <person name="Kube M."/>
            <person name="Bauer M."/>
            <person name="Teeling H."/>
            <person name="Lombardot T."/>
            <person name="Ludwig W."/>
            <person name="Gade D."/>
            <person name="Beck A."/>
            <person name="Borzym K."/>
            <person name="Heitmann K."/>
            <person name="Rabus R."/>
            <person name="Schlesner H."/>
            <person name="Amann R."/>
            <person name="Reinhardt R."/>
        </authorList>
    </citation>
    <scope>NUCLEOTIDE SEQUENCE [LARGE SCALE GENOMIC DNA]</scope>
    <source>
        <strain>DSM 10527 / NCIMB 13988 / SH1</strain>
    </source>
</reference>
<keyword id="KW-1185">Reference proteome</keyword>
<protein>
    <recommendedName>
        <fullName evidence="1">UPF0145 protein RB3016</fullName>
    </recommendedName>
</protein>
<organism>
    <name type="scientific">Rhodopirellula baltica (strain DSM 10527 / NCIMB 13988 / SH1)</name>
    <dbReference type="NCBI Taxonomy" id="243090"/>
    <lineage>
        <taxon>Bacteria</taxon>
        <taxon>Pseudomonadati</taxon>
        <taxon>Planctomycetota</taxon>
        <taxon>Planctomycetia</taxon>
        <taxon>Pirellulales</taxon>
        <taxon>Pirellulaceae</taxon>
        <taxon>Rhodopirellula</taxon>
    </lineage>
</organism>
<name>Y3016_RHOBA</name>
<gene>
    <name type="ordered locus">RB3016</name>
</gene>
<accession>Q7UUW5</accession>
<sequence length="112" mass="12026">MPMTTTSTFETHIIEAYRGPVFGETIYGANVLRDISAVFTDVVGGRAGDYEKVLIRGRNAALAEMSERAKQLGANAVIGIRFDYSTVGRSMLMICSSGTAVIANPRIPDASH</sequence>
<proteinExistence type="inferred from homology"/>